<keyword id="KW-0378">Hydrolase</keyword>
<keyword id="KW-0479">Metal-binding</keyword>
<keyword id="KW-0482">Metalloprotease</keyword>
<keyword id="KW-0645">Protease</keyword>
<keyword id="KW-0862">Zinc</keyword>
<proteinExistence type="inferred from homology"/>
<dbReference type="EMBL" id="BA000033">
    <property type="protein sequence ID" value="BAB95469.1"/>
    <property type="molecule type" value="Genomic_DNA"/>
</dbReference>
<dbReference type="SMR" id="Q8NW77"/>
<dbReference type="KEGG" id="sam:MW1604"/>
<dbReference type="HOGENOM" id="CLU_073529_0_2_9"/>
<dbReference type="GO" id="GO:0046872">
    <property type="term" value="F:metal ion binding"/>
    <property type="evidence" value="ECO:0007669"/>
    <property type="project" value="UniProtKB-KW"/>
</dbReference>
<dbReference type="GO" id="GO:0008237">
    <property type="term" value="F:metallopeptidase activity"/>
    <property type="evidence" value="ECO:0007669"/>
    <property type="project" value="UniProtKB-KW"/>
</dbReference>
<dbReference type="GO" id="GO:0006508">
    <property type="term" value="P:proteolysis"/>
    <property type="evidence" value="ECO:0007669"/>
    <property type="project" value="UniProtKB-KW"/>
</dbReference>
<dbReference type="CDD" id="cd08071">
    <property type="entry name" value="MPN_DUF2466"/>
    <property type="match status" value="1"/>
</dbReference>
<dbReference type="Gene3D" id="3.40.140.10">
    <property type="entry name" value="Cytidine Deaminase, domain 2"/>
    <property type="match status" value="1"/>
</dbReference>
<dbReference type="InterPro" id="IPR037518">
    <property type="entry name" value="MPN"/>
</dbReference>
<dbReference type="InterPro" id="IPR025657">
    <property type="entry name" value="RadC_JAB"/>
</dbReference>
<dbReference type="InterPro" id="IPR010994">
    <property type="entry name" value="RuvA_2-like"/>
</dbReference>
<dbReference type="InterPro" id="IPR001405">
    <property type="entry name" value="UPF0758"/>
</dbReference>
<dbReference type="InterPro" id="IPR020891">
    <property type="entry name" value="UPF0758_CS"/>
</dbReference>
<dbReference type="InterPro" id="IPR046778">
    <property type="entry name" value="UPF0758_N"/>
</dbReference>
<dbReference type="NCBIfam" id="NF000642">
    <property type="entry name" value="PRK00024.1"/>
    <property type="match status" value="1"/>
</dbReference>
<dbReference type="NCBIfam" id="TIGR00608">
    <property type="entry name" value="radc"/>
    <property type="match status" value="1"/>
</dbReference>
<dbReference type="PANTHER" id="PTHR30471">
    <property type="entry name" value="DNA REPAIR PROTEIN RADC"/>
    <property type="match status" value="1"/>
</dbReference>
<dbReference type="PANTHER" id="PTHR30471:SF3">
    <property type="entry name" value="UPF0758 PROTEIN YEES-RELATED"/>
    <property type="match status" value="1"/>
</dbReference>
<dbReference type="Pfam" id="PF04002">
    <property type="entry name" value="RadC"/>
    <property type="match status" value="1"/>
</dbReference>
<dbReference type="Pfam" id="PF20582">
    <property type="entry name" value="UPF0758_N"/>
    <property type="match status" value="1"/>
</dbReference>
<dbReference type="SUPFAM" id="SSF102712">
    <property type="entry name" value="JAB1/MPN domain"/>
    <property type="match status" value="1"/>
</dbReference>
<dbReference type="SUPFAM" id="SSF47781">
    <property type="entry name" value="RuvA domain 2-like"/>
    <property type="match status" value="1"/>
</dbReference>
<dbReference type="PROSITE" id="PS50249">
    <property type="entry name" value="MPN"/>
    <property type="match status" value="1"/>
</dbReference>
<dbReference type="PROSITE" id="PS01302">
    <property type="entry name" value="UPF0758"/>
    <property type="match status" value="1"/>
</dbReference>
<accession>Q8NW77</accession>
<feature type="chain" id="PRO_0000190733" description="UPF0758 protein MW1604">
    <location>
        <begin position="1"/>
        <end position="228"/>
    </location>
</feature>
<feature type="domain" description="MPN" evidence="1">
    <location>
        <begin position="102"/>
        <end position="224"/>
    </location>
</feature>
<feature type="short sequence motif" description="JAMM motif" evidence="1">
    <location>
        <begin position="173"/>
        <end position="186"/>
    </location>
</feature>
<feature type="binding site" evidence="1">
    <location>
        <position position="173"/>
    </location>
    <ligand>
        <name>Zn(2+)</name>
        <dbReference type="ChEBI" id="CHEBI:29105"/>
        <note>catalytic</note>
    </ligand>
</feature>
<feature type="binding site" evidence="1">
    <location>
        <position position="175"/>
    </location>
    <ligand>
        <name>Zn(2+)</name>
        <dbReference type="ChEBI" id="CHEBI:29105"/>
        <note>catalytic</note>
    </ligand>
</feature>
<feature type="binding site" evidence="1">
    <location>
        <position position="186"/>
    </location>
    <ligand>
        <name>Zn(2+)</name>
        <dbReference type="ChEBI" id="CHEBI:29105"/>
        <note>catalytic</note>
    </ligand>
</feature>
<reference key="1">
    <citation type="journal article" date="2002" name="Lancet">
        <title>Genome and virulence determinants of high virulence community-acquired MRSA.</title>
        <authorList>
            <person name="Baba T."/>
            <person name="Takeuchi F."/>
            <person name="Kuroda M."/>
            <person name="Yuzawa H."/>
            <person name="Aoki K."/>
            <person name="Oguchi A."/>
            <person name="Nagai Y."/>
            <person name="Iwama N."/>
            <person name="Asano K."/>
            <person name="Naimi T."/>
            <person name="Kuroda H."/>
            <person name="Cui L."/>
            <person name="Yamamoto K."/>
            <person name="Hiramatsu K."/>
        </authorList>
    </citation>
    <scope>NUCLEOTIDE SEQUENCE [LARGE SCALE GENOMIC DNA]</scope>
    <source>
        <strain>MW2</strain>
    </source>
</reference>
<protein>
    <recommendedName>
        <fullName>UPF0758 protein MW1604</fullName>
    </recommendedName>
</protein>
<sequence>MKIKEMVTSEMPRERLLSHGAKSLSNTELLAILINTGRKGFSSIDISNELLKSASNLNELKKSSINDLIKVKGIGLQKAITLKAAFELGERMGRRAENNRIKITQPSDVADYMIPTMKDLTQEHFVILLLNSKNVVIKETCVFKGTLNSSIVHPREIFSIAVRENANAIIAVHNHPSGDVTPSQEDIITTMRLKECGLILGIDLLDHIIIGDNRFTSLVEAGYFDEND</sequence>
<evidence type="ECO:0000255" key="1">
    <source>
        <dbReference type="PROSITE-ProRule" id="PRU01182"/>
    </source>
</evidence>
<evidence type="ECO:0000305" key="2"/>
<comment type="similarity">
    <text evidence="2">Belongs to the UPF0758 family.</text>
</comment>
<gene>
    <name type="ordered locus">MW1604</name>
</gene>
<organism>
    <name type="scientific">Staphylococcus aureus (strain MW2)</name>
    <dbReference type="NCBI Taxonomy" id="196620"/>
    <lineage>
        <taxon>Bacteria</taxon>
        <taxon>Bacillati</taxon>
        <taxon>Bacillota</taxon>
        <taxon>Bacilli</taxon>
        <taxon>Bacillales</taxon>
        <taxon>Staphylococcaceae</taxon>
        <taxon>Staphylococcus</taxon>
    </lineage>
</organism>
<name>Y1604_STAAW</name>